<protein>
    <recommendedName>
        <fullName evidence="1">Glutamyl-tRNA reductase</fullName>
        <shortName evidence="1">GluTR</shortName>
        <ecNumber evidence="1">1.2.1.70</ecNumber>
    </recommendedName>
</protein>
<feature type="chain" id="PRO_0000335047" description="Glutamyl-tRNA reductase">
    <location>
        <begin position="1"/>
        <end position="429"/>
    </location>
</feature>
<feature type="active site" description="Nucleophile" evidence="1">
    <location>
        <position position="57"/>
    </location>
</feature>
<feature type="binding site" evidence="1">
    <location>
        <begin position="56"/>
        <end position="59"/>
    </location>
    <ligand>
        <name>substrate</name>
    </ligand>
</feature>
<feature type="binding site" evidence="1">
    <location>
        <position position="119"/>
    </location>
    <ligand>
        <name>substrate</name>
    </ligand>
</feature>
<feature type="binding site" evidence="1">
    <location>
        <begin position="124"/>
        <end position="126"/>
    </location>
    <ligand>
        <name>substrate</name>
    </ligand>
</feature>
<feature type="binding site" evidence="1">
    <location>
        <position position="130"/>
    </location>
    <ligand>
        <name>substrate</name>
    </ligand>
</feature>
<feature type="binding site" evidence="1">
    <location>
        <begin position="199"/>
        <end position="204"/>
    </location>
    <ligand>
        <name>NADP(+)</name>
        <dbReference type="ChEBI" id="CHEBI:58349"/>
    </ligand>
</feature>
<feature type="site" description="Important for activity" evidence="1">
    <location>
        <position position="109"/>
    </location>
</feature>
<keyword id="KW-0521">NADP</keyword>
<keyword id="KW-0560">Oxidoreductase</keyword>
<keyword id="KW-0627">Porphyrin biosynthesis</keyword>
<organism>
    <name type="scientific">Janthinobacterium sp. (strain Marseille)</name>
    <name type="common">Minibacterium massiliensis</name>
    <dbReference type="NCBI Taxonomy" id="375286"/>
    <lineage>
        <taxon>Bacteria</taxon>
        <taxon>Pseudomonadati</taxon>
        <taxon>Pseudomonadota</taxon>
        <taxon>Betaproteobacteria</taxon>
        <taxon>Burkholderiales</taxon>
        <taxon>Oxalobacteraceae</taxon>
        <taxon>Janthinobacterium</taxon>
    </lineage>
</organism>
<sequence>MQLLAVGLNHTTAPVSLREKVAFPADQLGQAVASARSWYGRSDATTYTDEAAILSTCNRTELYAASNLPGGVNEAIDITAHFLADYHKLPYAELRPYLYALPQDNAVRHAFRVASGLDSMVLGEPQILGQMKDAVRQAEAAGGLGTYLHQMFQRTFAVAKEVRSTTEIGAHSVSMAAASVRLSQRIFDKISEQNVLFIGAGEMIELSATHFAAQNPKSVTIANRTLERGQTLAHRFNGKAIRLADLPDQLASYDIVISSTASSLPIIGLGMVERAIKARRHKPMFMVDLAVPRDIEAEIGRLDDVFLYTVDDLGSFVQTGVENRQAAVAQAEAIIETRVRSFMHWIDARAVVPVIQDLHESSETMRMIELERARKLLAKGEDIDAVLEALSKGLTAKFLHGPQQALNNAQGDERARLAALLPQLFRTKR</sequence>
<dbReference type="EC" id="1.2.1.70" evidence="1"/>
<dbReference type="EMBL" id="CP000269">
    <property type="protein sequence ID" value="ABR88801.1"/>
    <property type="molecule type" value="Genomic_DNA"/>
</dbReference>
<dbReference type="RefSeq" id="WP_011979440.1">
    <property type="nucleotide sequence ID" value="NC_009659.1"/>
</dbReference>
<dbReference type="SMR" id="A6SUF7"/>
<dbReference type="STRING" id="375286.mma_0214"/>
<dbReference type="KEGG" id="mms:mma_0214"/>
<dbReference type="eggNOG" id="COG0373">
    <property type="taxonomic scope" value="Bacteria"/>
</dbReference>
<dbReference type="HOGENOM" id="CLU_035113_2_2_4"/>
<dbReference type="OrthoDB" id="110209at2"/>
<dbReference type="UniPathway" id="UPA00251">
    <property type="reaction ID" value="UER00316"/>
</dbReference>
<dbReference type="Proteomes" id="UP000006388">
    <property type="component" value="Chromosome"/>
</dbReference>
<dbReference type="GO" id="GO:0008883">
    <property type="term" value="F:glutamyl-tRNA reductase activity"/>
    <property type="evidence" value="ECO:0007669"/>
    <property type="project" value="UniProtKB-UniRule"/>
</dbReference>
<dbReference type="GO" id="GO:0050661">
    <property type="term" value="F:NADP binding"/>
    <property type="evidence" value="ECO:0007669"/>
    <property type="project" value="InterPro"/>
</dbReference>
<dbReference type="GO" id="GO:0019353">
    <property type="term" value="P:protoporphyrinogen IX biosynthetic process from glutamate"/>
    <property type="evidence" value="ECO:0007669"/>
    <property type="project" value="TreeGrafter"/>
</dbReference>
<dbReference type="CDD" id="cd05213">
    <property type="entry name" value="NAD_bind_Glutamyl_tRNA_reduct"/>
    <property type="match status" value="1"/>
</dbReference>
<dbReference type="FunFam" id="3.30.460.30:FF:000001">
    <property type="entry name" value="Glutamyl-tRNA reductase"/>
    <property type="match status" value="1"/>
</dbReference>
<dbReference type="FunFam" id="3.40.50.720:FF:000031">
    <property type="entry name" value="Glutamyl-tRNA reductase"/>
    <property type="match status" value="1"/>
</dbReference>
<dbReference type="Gene3D" id="3.30.460.30">
    <property type="entry name" value="Glutamyl-tRNA reductase, N-terminal domain"/>
    <property type="match status" value="1"/>
</dbReference>
<dbReference type="Gene3D" id="3.40.50.720">
    <property type="entry name" value="NAD(P)-binding Rossmann-like Domain"/>
    <property type="match status" value="1"/>
</dbReference>
<dbReference type="HAMAP" id="MF_00087">
    <property type="entry name" value="Glu_tRNA_reductase"/>
    <property type="match status" value="1"/>
</dbReference>
<dbReference type="InterPro" id="IPR000343">
    <property type="entry name" value="4pyrrol_synth_GluRdtase"/>
</dbReference>
<dbReference type="InterPro" id="IPR015896">
    <property type="entry name" value="4pyrrol_synth_GluRdtase_dimer"/>
</dbReference>
<dbReference type="InterPro" id="IPR015895">
    <property type="entry name" value="4pyrrol_synth_GluRdtase_N"/>
</dbReference>
<dbReference type="InterPro" id="IPR018214">
    <property type="entry name" value="GluRdtase_CS"/>
</dbReference>
<dbReference type="InterPro" id="IPR036453">
    <property type="entry name" value="GluRdtase_dimer_dom_sf"/>
</dbReference>
<dbReference type="InterPro" id="IPR036343">
    <property type="entry name" value="GluRdtase_N_sf"/>
</dbReference>
<dbReference type="InterPro" id="IPR036291">
    <property type="entry name" value="NAD(P)-bd_dom_sf"/>
</dbReference>
<dbReference type="InterPro" id="IPR006151">
    <property type="entry name" value="Shikm_DH/Glu-tRNA_Rdtase"/>
</dbReference>
<dbReference type="NCBIfam" id="TIGR01035">
    <property type="entry name" value="hemA"/>
    <property type="match status" value="1"/>
</dbReference>
<dbReference type="PANTHER" id="PTHR43013">
    <property type="entry name" value="GLUTAMYL-TRNA REDUCTASE"/>
    <property type="match status" value="1"/>
</dbReference>
<dbReference type="PANTHER" id="PTHR43013:SF1">
    <property type="entry name" value="GLUTAMYL-TRNA REDUCTASE"/>
    <property type="match status" value="1"/>
</dbReference>
<dbReference type="Pfam" id="PF00745">
    <property type="entry name" value="GlutR_dimer"/>
    <property type="match status" value="1"/>
</dbReference>
<dbReference type="Pfam" id="PF05201">
    <property type="entry name" value="GlutR_N"/>
    <property type="match status" value="1"/>
</dbReference>
<dbReference type="Pfam" id="PF01488">
    <property type="entry name" value="Shikimate_DH"/>
    <property type="match status" value="1"/>
</dbReference>
<dbReference type="PIRSF" id="PIRSF000445">
    <property type="entry name" value="4pyrrol_synth_GluRdtase"/>
    <property type="match status" value="1"/>
</dbReference>
<dbReference type="SUPFAM" id="SSF69742">
    <property type="entry name" value="Glutamyl tRNA-reductase catalytic, N-terminal domain"/>
    <property type="match status" value="1"/>
</dbReference>
<dbReference type="SUPFAM" id="SSF69075">
    <property type="entry name" value="Glutamyl tRNA-reductase dimerization domain"/>
    <property type="match status" value="1"/>
</dbReference>
<dbReference type="SUPFAM" id="SSF51735">
    <property type="entry name" value="NAD(P)-binding Rossmann-fold domains"/>
    <property type="match status" value="1"/>
</dbReference>
<dbReference type="PROSITE" id="PS00747">
    <property type="entry name" value="GLUTR"/>
    <property type="match status" value="1"/>
</dbReference>
<proteinExistence type="inferred from homology"/>
<comment type="function">
    <text evidence="1">Catalyzes the NADPH-dependent reduction of glutamyl-tRNA(Glu) to glutamate 1-semialdehyde (GSA).</text>
</comment>
<comment type="catalytic activity">
    <reaction evidence="1">
        <text>(S)-4-amino-5-oxopentanoate + tRNA(Glu) + NADP(+) = L-glutamyl-tRNA(Glu) + NADPH + H(+)</text>
        <dbReference type="Rhea" id="RHEA:12344"/>
        <dbReference type="Rhea" id="RHEA-COMP:9663"/>
        <dbReference type="Rhea" id="RHEA-COMP:9680"/>
        <dbReference type="ChEBI" id="CHEBI:15378"/>
        <dbReference type="ChEBI" id="CHEBI:57501"/>
        <dbReference type="ChEBI" id="CHEBI:57783"/>
        <dbReference type="ChEBI" id="CHEBI:58349"/>
        <dbReference type="ChEBI" id="CHEBI:78442"/>
        <dbReference type="ChEBI" id="CHEBI:78520"/>
        <dbReference type="EC" id="1.2.1.70"/>
    </reaction>
</comment>
<comment type="pathway">
    <text evidence="1">Porphyrin-containing compound metabolism; protoporphyrin-IX biosynthesis; 5-aminolevulinate from L-glutamyl-tRNA(Glu): step 1/2.</text>
</comment>
<comment type="subunit">
    <text evidence="1">Homodimer.</text>
</comment>
<comment type="domain">
    <text evidence="1">Possesses an unusual extended V-shaped dimeric structure with each monomer consisting of three distinct domains arranged along a curved 'spinal' alpha-helix. The N-terminal catalytic domain specifically recognizes the glutamate moiety of the substrate. The second domain is the NADPH-binding domain, and the third C-terminal domain is responsible for dimerization.</text>
</comment>
<comment type="miscellaneous">
    <text evidence="1">During catalysis, the active site Cys acts as a nucleophile attacking the alpha-carbonyl group of tRNA-bound glutamate with the formation of a thioester intermediate between enzyme and glutamate, and the concomitant release of tRNA(Glu). The thioester intermediate is finally reduced by direct hydride transfer from NADPH, to form the product GSA.</text>
</comment>
<comment type="similarity">
    <text evidence="1">Belongs to the glutamyl-tRNA reductase family.</text>
</comment>
<accession>A6SUF7</accession>
<name>HEM1_JANMA</name>
<gene>
    <name evidence="1" type="primary">hemA</name>
    <name type="ordered locus">mma_0214</name>
</gene>
<reference key="1">
    <citation type="journal article" date="2007" name="PLoS Genet.">
        <title>Genome analysis of Minibacterium massiliensis highlights the convergent evolution of water-living bacteria.</title>
        <authorList>
            <person name="Audic S."/>
            <person name="Robert C."/>
            <person name="Campagna B."/>
            <person name="Parinello H."/>
            <person name="Claverie J.-M."/>
            <person name="Raoult D."/>
            <person name="Drancourt M."/>
        </authorList>
    </citation>
    <scope>NUCLEOTIDE SEQUENCE [LARGE SCALE GENOMIC DNA]</scope>
    <source>
        <strain>Marseille</strain>
    </source>
</reference>
<evidence type="ECO:0000255" key="1">
    <source>
        <dbReference type="HAMAP-Rule" id="MF_00087"/>
    </source>
</evidence>